<proteinExistence type="inferred from homology"/>
<name>PYRB_ACIF5</name>
<organism>
    <name type="scientific">Acidithiobacillus ferrooxidans (strain ATCC 53993 / BNL-5-31)</name>
    <name type="common">Leptospirillum ferrooxidans (ATCC 53993)</name>
    <dbReference type="NCBI Taxonomy" id="380394"/>
    <lineage>
        <taxon>Bacteria</taxon>
        <taxon>Pseudomonadati</taxon>
        <taxon>Pseudomonadota</taxon>
        <taxon>Acidithiobacillia</taxon>
        <taxon>Acidithiobacillales</taxon>
        <taxon>Acidithiobacillaceae</taxon>
        <taxon>Acidithiobacillus</taxon>
    </lineage>
</organism>
<comment type="function">
    <text evidence="1">Catalyzes the condensation of carbamoyl phosphate and aspartate to form carbamoyl aspartate and inorganic phosphate, the committed step in the de novo pyrimidine nucleotide biosynthesis pathway.</text>
</comment>
<comment type="catalytic activity">
    <reaction evidence="1">
        <text>carbamoyl phosphate + L-aspartate = N-carbamoyl-L-aspartate + phosphate + H(+)</text>
        <dbReference type="Rhea" id="RHEA:20013"/>
        <dbReference type="ChEBI" id="CHEBI:15378"/>
        <dbReference type="ChEBI" id="CHEBI:29991"/>
        <dbReference type="ChEBI" id="CHEBI:32814"/>
        <dbReference type="ChEBI" id="CHEBI:43474"/>
        <dbReference type="ChEBI" id="CHEBI:58228"/>
        <dbReference type="EC" id="2.1.3.2"/>
    </reaction>
</comment>
<comment type="pathway">
    <text evidence="1">Pyrimidine metabolism; UMP biosynthesis via de novo pathway; (S)-dihydroorotate from bicarbonate: step 2/3.</text>
</comment>
<comment type="subunit">
    <text evidence="1">Heterododecamer (2C3:3R2) of six catalytic PyrB chains organized as two trimers (C3), and six regulatory PyrI chains organized as three dimers (R2).</text>
</comment>
<comment type="similarity">
    <text evidence="1">Belongs to the aspartate/ornithine carbamoyltransferase superfamily. ATCase family.</text>
</comment>
<reference key="1">
    <citation type="submission" date="2008-08" db="EMBL/GenBank/DDBJ databases">
        <title>Complete sequence of Acidithiobacillus ferrooxidans ATCC 53993.</title>
        <authorList>
            <person name="Lucas S."/>
            <person name="Copeland A."/>
            <person name="Lapidus A."/>
            <person name="Glavina del Rio T."/>
            <person name="Dalin E."/>
            <person name="Tice H."/>
            <person name="Bruce D."/>
            <person name="Goodwin L."/>
            <person name="Pitluck S."/>
            <person name="Sims D."/>
            <person name="Brettin T."/>
            <person name="Detter J.C."/>
            <person name="Han C."/>
            <person name="Kuske C.R."/>
            <person name="Larimer F."/>
            <person name="Land M."/>
            <person name="Hauser L."/>
            <person name="Kyrpides N."/>
            <person name="Lykidis A."/>
            <person name="Borole A.P."/>
        </authorList>
    </citation>
    <scope>NUCLEOTIDE SEQUENCE [LARGE SCALE GENOMIC DNA]</scope>
    <source>
        <strain>ATCC 53993 / BNL-5-31</strain>
    </source>
</reference>
<gene>
    <name evidence="1" type="primary">pyrB</name>
    <name type="ordered locus">Lferr_2666</name>
</gene>
<evidence type="ECO:0000255" key="1">
    <source>
        <dbReference type="HAMAP-Rule" id="MF_00001"/>
    </source>
</evidence>
<sequence length="327" mass="35321">MSATLRFGEGNLQYDAQGRLRHLLSTEGLRERELLQILDTAESFLSIANRSVKKTPTLRGRTIANLFFENSTRTRSTFELAAKRLSADVLNIAVSTSSASKGESLTDTIDNLMAMQVDGFVIRHPEAGAAHLVARHLGDSALVVNAGDGQHAHPTQALLDVFTIRRLGGPIEDRVVAIVGDVFHSRVARSQIHALSVLGCPEIRVIGPRTLVPEELSALGVHVYHDLQAGLRGVDVICALRLQRERMESHRLPSLDEFHRRFGLTPERLQWAEPGALVLHPGPMNRGVEIASEVADGAQAVILQQVAHGLAVRMAVLAILAGAAGGA</sequence>
<protein>
    <recommendedName>
        <fullName evidence="1">Aspartate carbamoyltransferase catalytic subunit</fullName>
        <ecNumber evidence="1">2.1.3.2</ecNumber>
    </recommendedName>
    <alternativeName>
        <fullName evidence="1">Aspartate transcarbamylase</fullName>
        <shortName evidence="1">ATCase</shortName>
    </alternativeName>
</protein>
<feature type="chain" id="PRO_1000088732" description="Aspartate carbamoyltransferase catalytic subunit">
    <location>
        <begin position="1"/>
        <end position="327"/>
    </location>
</feature>
<feature type="binding site" evidence="1">
    <location>
        <position position="73"/>
    </location>
    <ligand>
        <name>carbamoyl phosphate</name>
        <dbReference type="ChEBI" id="CHEBI:58228"/>
    </ligand>
</feature>
<feature type="binding site" evidence="1">
    <location>
        <position position="74"/>
    </location>
    <ligand>
        <name>carbamoyl phosphate</name>
        <dbReference type="ChEBI" id="CHEBI:58228"/>
    </ligand>
</feature>
<feature type="binding site" evidence="1">
    <location>
        <position position="101"/>
    </location>
    <ligand>
        <name>L-aspartate</name>
        <dbReference type="ChEBI" id="CHEBI:29991"/>
    </ligand>
</feature>
<feature type="binding site" evidence="1">
    <location>
        <position position="123"/>
    </location>
    <ligand>
        <name>carbamoyl phosphate</name>
        <dbReference type="ChEBI" id="CHEBI:58228"/>
    </ligand>
</feature>
<feature type="binding site" evidence="1">
    <location>
        <position position="153"/>
    </location>
    <ligand>
        <name>carbamoyl phosphate</name>
        <dbReference type="ChEBI" id="CHEBI:58228"/>
    </ligand>
</feature>
<feature type="binding site" evidence="1">
    <location>
        <position position="156"/>
    </location>
    <ligand>
        <name>carbamoyl phosphate</name>
        <dbReference type="ChEBI" id="CHEBI:58228"/>
    </ligand>
</feature>
<feature type="binding site" evidence="1">
    <location>
        <position position="186"/>
    </location>
    <ligand>
        <name>L-aspartate</name>
        <dbReference type="ChEBI" id="CHEBI:29991"/>
    </ligand>
</feature>
<feature type="binding site" evidence="1">
    <location>
        <position position="241"/>
    </location>
    <ligand>
        <name>L-aspartate</name>
        <dbReference type="ChEBI" id="CHEBI:29991"/>
    </ligand>
</feature>
<feature type="binding site" evidence="1">
    <location>
        <position position="282"/>
    </location>
    <ligand>
        <name>carbamoyl phosphate</name>
        <dbReference type="ChEBI" id="CHEBI:58228"/>
    </ligand>
</feature>
<feature type="binding site" evidence="1">
    <location>
        <position position="283"/>
    </location>
    <ligand>
        <name>carbamoyl phosphate</name>
        <dbReference type="ChEBI" id="CHEBI:58228"/>
    </ligand>
</feature>
<dbReference type="EC" id="2.1.3.2" evidence="1"/>
<dbReference type="EMBL" id="CP001132">
    <property type="protein sequence ID" value="ACH84860.1"/>
    <property type="molecule type" value="Genomic_DNA"/>
</dbReference>
<dbReference type="RefSeq" id="WP_012537572.1">
    <property type="nucleotide sequence ID" value="NC_011206.1"/>
</dbReference>
<dbReference type="SMR" id="B5EQG3"/>
<dbReference type="KEGG" id="afe:Lferr_2666"/>
<dbReference type="eggNOG" id="COG0540">
    <property type="taxonomic scope" value="Bacteria"/>
</dbReference>
<dbReference type="HOGENOM" id="CLU_043846_2_0_6"/>
<dbReference type="UniPathway" id="UPA00070">
    <property type="reaction ID" value="UER00116"/>
</dbReference>
<dbReference type="GO" id="GO:0005829">
    <property type="term" value="C:cytosol"/>
    <property type="evidence" value="ECO:0007669"/>
    <property type="project" value="TreeGrafter"/>
</dbReference>
<dbReference type="GO" id="GO:0016597">
    <property type="term" value="F:amino acid binding"/>
    <property type="evidence" value="ECO:0007669"/>
    <property type="project" value="InterPro"/>
</dbReference>
<dbReference type="GO" id="GO:0004070">
    <property type="term" value="F:aspartate carbamoyltransferase activity"/>
    <property type="evidence" value="ECO:0007669"/>
    <property type="project" value="UniProtKB-UniRule"/>
</dbReference>
<dbReference type="GO" id="GO:0006207">
    <property type="term" value="P:'de novo' pyrimidine nucleobase biosynthetic process"/>
    <property type="evidence" value="ECO:0007669"/>
    <property type="project" value="InterPro"/>
</dbReference>
<dbReference type="GO" id="GO:0044205">
    <property type="term" value="P:'de novo' UMP biosynthetic process"/>
    <property type="evidence" value="ECO:0007669"/>
    <property type="project" value="UniProtKB-UniRule"/>
</dbReference>
<dbReference type="GO" id="GO:0006520">
    <property type="term" value="P:amino acid metabolic process"/>
    <property type="evidence" value="ECO:0007669"/>
    <property type="project" value="InterPro"/>
</dbReference>
<dbReference type="FunFam" id="3.40.50.1370:FF:000007">
    <property type="entry name" value="Aspartate carbamoyltransferase"/>
    <property type="match status" value="1"/>
</dbReference>
<dbReference type="Gene3D" id="3.40.50.1370">
    <property type="entry name" value="Aspartate/ornithine carbamoyltransferase"/>
    <property type="match status" value="2"/>
</dbReference>
<dbReference type="HAMAP" id="MF_00001">
    <property type="entry name" value="Asp_carb_tr"/>
    <property type="match status" value="1"/>
</dbReference>
<dbReference type="InterPro" id="IPR006132">
    <property type="entry name" value="Asp/Orn_carbamoyltranf_P-bd"/>
</dbReference>
<dbReference type="InterPro" id="IPR006130">
    <property type="entry name" value="Asp/Orn_carbamoylTrfase"/>
</dbReference>
<dbReference type="InterPro" id="IPR036901">
    <property type="entry name" value="Asp/Orn_carbamoylTrfase_sf"/>
</dbReference>
<dbReference type="InterPro" id="IPR002082">
    <property type="entry name" value="Asp_carbamoyltransf"/>
</dbReference>
<dbReference type="InterPro" id="IPR006131">
    <property type="entry name" value="Asp_carbamoyltransf_Asp/Orn-bd"/>
</dbReference>
<dbReference type="NCBIfam" id="TIGR00670">
    <property type="entry name" value="asp_carb_tr"/>
    <property type="match status" value="1"/>
</dbReference>
<dbReference type="NCBIfam" id="NF002032">
    <property type="entry name" value="PRK00856.1"/>
    <property type="match status" value="1"/>
</dbReference>
<dbReference type="PANTHER" id="PTHR45753:SF6">
    <property type="entry name" value="ASPARTATE CARBAMOYLTRANSFERASE"/>
    <property type="match status" value="1"/>
</dbReference>
<dbReference type="PANTHER" id="PTHR45753">
    <property type="entry name" value="ORNITHINE CARBAMOYLTRANSFERASE, MITOCHONDRIAL"/>
    <property type="match status" value="1"/>
</dbReference>
<dbReference type="Pfam" id="PF00185">
    <property type="entry name" value="OTCace"/>
    <property type="match status" value="1"/>
</dbReference>
<dbReference type="Pfam" id="PF02729">
    <property type="entry name" value="OTCace_N"/>
    <property type="match status" value="1"/>
</dbReference>
<dbReference type="PRINTS" id="PR00100">
    <property type="entry name" value="AOTCASE"/>
</dbReference>
<dbReference type="PRINTS" id="PR00101">
    <property type="entry name" value="ATCASE"/>
</dbReference>
<dbReference type="SUPFAM" id="SSF53671">
    <property type="entry name" value="Aspartate/ornithine carbamoyltransferase"/>
    <property type="match status" value="1"/>
</dbReference>
<dbReference type="PROSITE" id="PS00097">
    <property type="entry name" value="CARBAMOYLTRANSFERASE"/>
    <property type="match status" value="1"/>
</dbReference>
<keyword id="KW-0665">Pyrimidine biosynthesis</keyword>
<keyword id="KW-0808">Transferase</keyword>
<accession>B5EQG3</accession>